<sequence>MSRQNYIFTSESVSEGHPDKVCDRISDAVLDAFLTEEPEARVACETFATTNRVVIGGEVGLSDQAKLREYMGRIDQIARDCIKDIGYEQDKFHHETVEITNLLHEQSAHIAQGVNAAEGKDEGAGDQGIMFGYATTETPALMPAPIQYSHAILRRLAEVRKNGTEPALGPDAKSQLSVIYRDGMPVGVSSLVLSTQHLDPDLTSADIRAIVEPYIREVLPEGWLSADTVWHVNPTGKFVIGGPDGDAGLTGRKIIVDTYGGAAPHGGGAFSGKDPTKVDRSAAYAARYLAKNVVAAGLADKCTIQLSYAIGVSKPLSIYADTHGTGDIAPAAIEKAIDTVMDLTPRGIRTHLGLNKPIYERTAAYGHFGREPEADGGFSWERTDLAEALKKAV</sequence>
<comment type="function">
    <text evidence="1">Catalyzes the formation of S-adenosylmethionine (AdoMet) from methionine and ATP. The overall synthetic reaction is composed of two sequential steps, AdoMet formation and the subsequent tripolyphosphate hydrolysis which occurs prior to release of AdoMet from the enzyme.</text>
</comment>
<comment type="catalytic activity">
    <reaction evidence="1">
        <text>L-methionine + ATP + H2O = S-adenosyl-L-methionine + phosphate + diphosphate</text>
        <dbReference type="Rhea" id="RHEA:21080"/>
        <dbReference type="ChEBI" id="CHEBI:15377"/>
        <dbReference type="ChEBI" id="CHEBI:30616"/>
        <dbReference type="ChEBI" id="CHEBI:33019"/>
        <dbReference type="ChEBI" id="CHEBI:43474"/>
        <dbReference type="ChEBI" id="CHEBI:57844"/>
        <dbReference type="ChEBI" id="CHEBI:59789"/>
        <dbReference type="EC" id="2.5.1.6"/>
    </reaction>
</comment>
<comment type="cofactor">
    <cofactor evidence="1">
        <name>Mg(2+)</name>
        <dbReference type="ChEBI" id="CHEBI:18420"/>
    </cofactor>
    <text evidence="1">Binds 2 divalent ions per subunit.</text>
</comment>
<comment type="cofactor">
    <cofactor evidence="1">
        <name>K(+)</name>
        <dbReference type="ChEBI" id="CHEBI:29103"/>
    </cofactor>
    <text evidence="1">Binds 1 potassium ion per subunit.</text>
</comment>
<comment type="pathway">
    <text evidence="1">Amino-acid biosynthesis; S-adenosyl-L-methionine biosynthesis; S-adenosyl-L-methionine from L-methionine: step 1/1.</text>
</comment>
<comment type="subunit">
    <text evidence="1">Homotetramer; dimer of dimers.</text>
</comment>
<comment type="subcellular location">
    <subcellularLocation>
        <location evidence="1">Cytoplasm</location>
    </subcellularLocation>
</comment>
<comment type="similarity">
    <text evidence="1">Belongs to the AdoMet synthase family.</text>
</comment>
<dbReference type="EC" id="2.5.1.6" evidence="1"/>
<dbReference type="EMBL" id="CP000032">
    <property type="protein sequence ID" value="AAV97152.1"/>
    <property type="molecule type" value="Genomic_DNA"/>
</dbReference>
<dbReference type="RefSeq" id="WP_011241796.1">
    <property type="nucleotide sequence ID" value="NC_006569.1"/>
</dbReference>
<dbReference type="SMR" id="Q5LLL2"/>
<dbReference type="PaxDb" id="246200-SPOA0011"/>
<dbReference type="KEGG" id="sil:SPOA0011"/>
<dbReference type="eggNOG" id="COG0192">
    <property type="taxonomic scope" value="Bacteria"/>
</dbReference>
<dbReference type="HOGENOM" id="CLU_041802_1_1_5"/>
<dbReference type="OrthoDB" id="9801686at2"/>
<dbReference type="UniPathway" id="UPA00315">
    <property type="reaction ID" value="UER00080"/>
</dbReference>
<dbReference type="Proteomes" id="UP000001023">
    <property type="component" value="Plasmid megaplasmid"/>
</dbReference>
<dbReference type="GO" id="GO:0005737">
    <property type="term" value="C:cytoplasm"/>
    <property type="evidence" value="ECO:0007669"/>
    <property type="project" value="UniProtKB-SubCell"/>
</dbReference>
<dbReference type="GO" id="GO:0005524">
    <property type="term" value="F:ATP binding"/>
    <property type="evidence" value="ECO:0007669"/>
    <property type="project" value="UniProtKB-UniRule"/>
</dbReference>
<dbReference type="GO" id="GO:0000287">
    <property type="term" value="F:magnesium ion binding"/>
    <property type="evidence" value="ECO:0007669"/>
    <property type="project" value="UniProtKB-UniRule"/>
</dbReference>
<dbReference type="GO" id="GO:0004478">
    <property type="term" value="F:methionine adenosyltransferase activity"/>
    <property type="evidence" value="ECO:0007669"/>
    <property type="project" value="UniProtKB-UniRule"/>
</dbReference>
<dbReference type="GO" id="GO:0006730">
    <property type="term" value="P:one-carbon metabolic process"/>
    <property type="evidence" value="ECO:0007669"/>
    <property type="project" value="UniProtKB-KW"/>
</dbReference>
<dbReference type="GO" id="GO:0006556">
    <property type="term" value="P:S-adenosylmethionine biosynthetic process"/>
    <property type="evidence" value="ECO:0007669"/>
    <property type="project" value="UniProtKB-UniRule"/>
</dbReference>
<dbReference type="CDD" id="cd18079">
    <property type="entry name" value="S-AdoMet_synt"/>
    <property type="match status" value="1"/>
</dbReference>
<dbReference type="FunFam" id="3.30.300.10:FF:000003">
    <property type="entry name" value="S-adenosylmethionine synthase"/>
    <property type="match status" value="1"/>
</dbReference>
<dbReference type="Gene3D" id="3.30.300.10">
    <property type="match status" value="3"/>
</dbReference>
<dbReference type="HAMAP" id="MF_00086">
    <property type="entry name" value="S_AdoMet_synth1"/>
    <property type="match status" value="1"/>
</dbReference>
<dbReference type="InterPro" id="IPR022631">
    <property type="entry name" value="ADOMET_SYNTHASE_CS"/>
</dbReference>
<dbReference type="InterPro" id="IPR022630">
    <property type="entry name" value="S-AdoMet_synt_C"/>
</dbReference>
<dbReference type="InterPro" id="IPR022629">
    <property type="entry name" value="S-AdoMet_synt_central"/>
</dbReference>
<dbReference type="InterPro" id="IPR022628">
    <property type="entry name" value="S-AdoMet_synt_N"/>
</dbReference>
<dbReference type="InterPro" id="IPR002133">
    <property type="entry name" value="S-AdoMet_synthetase"/>
</dbReference>
<dbReference type="InterPro" id="IPR022636">
    <property type="entry name" value="S-AdoMet_synthetase_sfam"/>
</dbReference>
<dbReference type="NCBIfam" id="TIGR01034">
    <property type="entry name" value="metK"/>
    <property type="match status" value="1"/>
</dbReference>
<dbReference type="PANTHER" id="PTHR11964">
    <property type="entry name" value="S-ADENOSYLMETHIONINE SYNTHETASE"/>
    <property type="match status" value="1"/>
</dbReference>
<dbReference type="Pfam" id="PF02773">
    <property type="entry name" value="S-AdoMet_synt_C"/>
    <property type="match status" value="1"/>
</dbReference>
<dbReference type="Pfam" id="PF02772">
    <property type="entry name" value="S-AdoMet_synt_M"/>
    <property type="match status" value="1"/>
</dbReference>
<dbReference type="Pfam" id="PF00438">
    <property type="entry name" value="S-AdoMet_synt_N"/>
    <property type="match status" value="1"/>
</dbReference>
<dbReference type="PIRSF" id="PIRSF000497">
    <property type="entry name" value="MAT"/>
    <property type="match status" value="1"/>
</dbReference>
<dbReference type="SUPFAM" id="SSF55973">
    <property type="entry name" value="S-adenosylmethionine synthetase"/>
    <property type="match status" value="3"/>
</dbReference>
<dbReference type="PROSITE" id="PS00376">
    <property type="entry name" value="ADOMET_SYNTHASE_1"/>
    <property type="match status" value="1"/>
</dbReference>
<dbReference type="PROSITE" id="PS00377">
    <property type="entry name" value="ADOMET_SYNTHASE_2"/>
    <property type="match status" value="1"/>
</dbReference>
<geneLocation type="plasmid">
    <name>megaplasmid Spo</name>
</geneLocation>
<reference key="1">
    <citation type="journal article" date="2004" name="Nature">
        <title>Genome sequence of Silicibacter pomeroyi reveals adaptations to the marine environment.</title>
        <authorList>
            <person name="Moran M.A."/>
            <person name="Buchan A."/>
            <person name="Gonzalez J.M."/>
            <person name="Heidelberg J.F."/>
            <person name="Whitman W.B."/>
            <person name="Kiene R.P."/>
            <person name="Henriksen J.R."/>
            <person name="King G.M."/>
            <person name="Belas R."/>
            <person name="Fuqua C."/>
            <person name="Brinkac L.M."/>
            <person name="Lewis M."/>
            <person name="Johri S."/>
            <person name="Weaver B."/>
            <person name="Pai G."/>
            <person name="Eisen J.A."/>
            <person name="Rahe E."/>
            <person name="Sheldon W.M."/>
            <person name="Ye W."/>
            <person name="Miller T.R."/>
            <person name="Carlton J."/>
            <person name="Rasko D.A."/>
            <person name="Paulsen I.T."/>
            <person name="Ren Q."/>
            <person name="Daugherty S.C."/>
            <person name="DeBoy R.T."/>
            <person name="Dodson R.J."/>
            <person name="Durkin A.S."/>
            <person name="Madupu R."/>
            <person name="Nelson W.C."/>
            <person name="Sullivan S.A."/>
            <person name="Rosovitz M.J."/>
            <person name="Haft D.H."/>
            <person name="Selengut J."/>
            <person name="Ward N."/>
        </authorList>
    </citation>
    <scope>NUCLEOTIDE SEQUENCE [LARGE SCALE GENOMIC DNA]</scope>
    <source>
        <strain>ATCC 700808 / DSM 15171 / DSS-3</strain>
    </source>
</reference>
<reference key="2">
    <citation type="journal article" date="2014" name="Stand. Genomic Sci.">
        <title>An updated genome annotation for the model marine bacterium Ruegeria pomeroyi DSS-3.</title>
        <authorList>
            <person name="Rivers A.R."/>
            <person name="Smith C.B."/>
            <person name="Moran M.A."/>
        </authorList>
    </citation>
    <scope>GENOME REANNOTATION</scope>
    <source>
        <strain>ATCC 700808 / DSM 15171 / DSS-3</strain>
    </source>
</reference>
<name>METK_RUEPO</name>
<keyword id="KW-0067">ATP-binding</keyword>
<keyword id="KW-0963">Cytoplasm</keyword>
<keyword id="KW-0460">Magnesium</keyword>
<keyword id="KW-0479">Metal-binding</keyword>
<keyword id="KW-0547">Nucleotide-binding</keyword>
<keyword id="KW-0554">One-carbon metabolism</keyword>
<keyword id="KW-0614">Plasmid</keyword>
<keyword id="KW-0630">Potassium</keyword>
<keyword id="KW-1185">Reference proteome</keyword>
<keyword id="KW-0808">Transferase</keyword>
<gene>
    <name evidence="1" type="primary">metK</name>
    <name type="ordered locus">SPOA0011</name>
</gene>
<protein>
    <recommendedName>
        <fullName evidence="1">S-adenosylmethionine synthase</fullName>
        <shortName evidence="1">AdoMet synthase</shortName>
        <ecNumber evidence="1">2.5.1.6</ecNumber>
    </recommendedName>
    <alternativeName>
        <fullName evidence="1">MAT</fullName>
    </alternativeName>
    <alternativeName>
        <fullName evidence="1">Methionine adenosyltransferase</fullName>
    </alternativeName>
</protein>
<organism>
    <name type="scientific">Ruegeria pomeroyi (strain ATCC 700808 / DSM 15171 / DSS-3)</name>
    <name type="common">Silicibacter pomeroyi</name>
    <dbReference type="NCBI Taxonomy" id="246200"/>
    <lineage>
        <taxon>Bacteria</taxon>
        <taxon>Pseudomonadati</taxon>
        <taxon>Pseudomonadota</taxon>
        <taxon>Alphaproteobacteria</taxon>
        <taxon>Rhodobacterales</taxon>
        <taxon>Roseobacteraceae</taxon>
        <taxon>Ruegeria</taxon>
    </lineage>
</organism>
<proteinExistence type="inferred from homology"/>
<evidence type="ECO:0000255" key="1">
    <source>
        <dbReference type="HAMAP-Rule" id="MF_00086"/>
    </source>
</evidence>
<accession>Q5LLL2</accession>
<feature type="chain" id="PRO_0000174585" description="S-adenosylmethionine synthase">
    <location>
        <begin position="1"/>
        <end position="393"/>
    </location>
</feature>
<feature type="region of interest" description="Flexible loop" evidence="1">
    <location>
        <begin position="106"/>
        <end position="116"/>
    </location>
</feature>
<feature type="binding site" description="in other chain" evidence="1">
    <location>
        <position position="17"/>
    </location>
    <ligand>
        <name>ATP</name>
        <dbReference type="ChEBI" id="CHEBI:30616"/>
        <note>ligand shared between two neighboring subunits</note>
    </ligand>
</feature>
<feature type="binding site" evidence="1">
    <location>
        <position position="19"/>
    </location>
    <ligand>
        <name>Mg(2+)</name>
        <dbReference type="ChEBI" id="CHEBI:18420"/>
    </ligand>
</feature>
<feature type="binding site" evidence="1">
    <location>
        <position position="45"/>
    </location>
    <ligand>
        <name>K(+)</name>
        <dbReference type="ChEBI" id="CHEBI:29103"/>
    </ligand>
</feature>
<feature type="binding site" description="in other chain" evidence="1">
    <location>
        <position position="58"/>
    </location>
    <ligand>
        <name>L-methionine</name>
        <dbReference type="ChEBI" id="CHEBI:57844"/>
        <note>ligand shared between two neighboring subunits</note>
    </ligand>
</feature>
<feature type="binding site" description="in other chain" evidence="1">
    <location>
        <position position="106"/>
    </location>
    <ligand>
        <name>L-methionine</name>
        <dbReference type="ChEBI" id="CHEBI:57844"/>
        <note>ligand shared between two neighboring subunits</note>
    </ligand>
</feature>
<feature type="binding site" description="in other chain" evidence="1">
    <location>
        <begin position="171"/>
        <end position="173"/>
    </location>
    <ligand>
        <name>ATP</name>
        <dbReference type="ChEBI" id="CHEBI:30616"/>
        <note>ligand shared between two neighboring subunits</note>
    </ligand>
</feature>
<feature type="binding site" description="in other chain" evidence="1">
    <location>
        <begin position="237"/>
        <end position="238"/>
    </location>
    <ligand>
        <name>ATP</name>
        <dbReference type="ChEBI" id="CHEBI:30616"/>
        <note>ligand shared between two neighboring subunits</note>
    </ligand>
</feature>
<feature type="binding site" evidence="1">
    <location>
        <position position="246"/>
    </location>
    <ligand>
        <name>ATP</name>
        <dbReference type="ChEBI" id="CHEBI:30616"/>
        <note>ligand shared between two neighboring subunits</note>
    </ligand>
</feature>
<feature type="binding site" evidence="1">
    <location>
        <position position="246"/>
    </location>
    <ligand>
        <name>L-methionine</name>
        <dbReference type="ChEBI" id="CHEBI:57844"/>
        <note>ligand shared between two neighboring subunits</note>
    </ligand>
</feature>
<feature type="binding site" description="in other chain" evidence="1">
    <location>
        <begin position="252"/>
        <end position="253"/>
    </location>
    <ligand>
        <name>ATP</name>
        <dbReference type="ChEBI" id="CHEBI:30616"/>
        <note>ligand shared between two neighboring subunits</note>
    </ligand>
</feature>
<feature type="binding site" evidence="1">
    <location>
        <position position="269"/>
    </location>
    <ligand>
        <name>ATP</name>
        <dbReference type="ChEBI" id="CHEBI:30616"/>
        <note>ligand shared between two neighboring subunits</note>
    </ligand>
</feature>
<feature type="binding site" evidence="1">
    <location>
        <position position="273"/>
    </location>
    <ligand>
        <name>ATP</name>
        <dbReference type="ChEBI" id="CHEBI:30616"/>
        <note>ligand shared between two neighboring subunits</note>
    </ligand>
</feature>
<feature type="binding site" description="in other chain" evidence="1">
    <location>
        <position position="277"/>
    </location>
    <ligand>
        <name>L-methionine</name>
        <dbReference type="ChEBI" id="CHEBI:57844"/>
        <note>ligand shared between two neighboring subunits</note>
    </ligand>
</feature>